<proteinExistence type="evidence at protein level"/>
<protein>
    <recommendedName>
        <fullName>Bradykinin-potentiating peptide S4,1,2</fullName>
        <shortName>BPP</shortName>
    </recommendedName>
    <alternativeName>
        <fullName>Angiotensin-converting enzyme inhibitor</fullName>
    </alternativeName>
</protein>
<accession>P30424</accession>
<reference key="1">
    <citation type="journal article" date="1990" name="J. Protein Chem.">
        <title>Primary structure and biological activity of bradykinin potentiating peptides from Bothrops insularis snake venom.</title>
        <authorList>
            <person name="Cintra A.C.O."/>
            <person name="Vieira C.A."/>
            <person name="Giglio J.R."/>
        </authorList>
    </citation>
    <scope>PROTEIN SEQUENCE</scope>
    <scope>PYROGLUTAMATE FORMATION AT GLN-1</scope>
    <source>
        <tissue>Venom</tissue>
    </source>
</reference>
<sequence>QGGPPRPQIPP</sequence>
<organism>
    <name type="scientific">Bothrops insularis</name>
    <name type="common">Golden lancehead</name>
    <name type="synonym">Lachesis insularis</name>
    <dbReference type="NCBI Taxonomy" id="8723"/>
    <lineage>
        <taxon>Eukaryota</taxon>
        <taxon>Metazoa</taxon>
        <taxon>Chordata</taxon>
        <taxon>Craniata</taxon>
        <taxon>Vertebrata</taxon>
        <taxon>Euteleostomi</taxon>
        <taxon>Lepidosauria</taxon>
        <taxon>Squamata</taxon>
        <taxon>Bifurcata</taxon>
        <taxon>Unidentata</taxon>
        <taxon>Episquamata</taxon>
        <taxon>Toxicofera</taxon>
        <taxon>Serpentes</taxon>
        <taxon>Colubroidea</taxon>
        <taxon>Viperidae</taxon>
        <taxon>Crotalinae</taxon>
        <taxon>Bothrops</taxon>
    </lineage>
</organism>
<feature type="peptide" id="PRO_0000043510" description="Bradykinin-potentiating peptide S4,1,2">
    <location>
        <begin position="1"/>
        <end position="11"/>
    </location>
</feature>
<feature type="modified residue" description="Pyrrolidone carboxylic acid" evidence="1">
    <location>
        <position position="1"/>
    </location>
</feature>
<evidence type="ECO:0000269" key="1">
    <source>
    </source>
</evidence>
<evidence type="ECO:0000305" key="2"/>
<name>BPP4_BOTIN</name>
<dbReference type="PIR" id="D37196">
    <property type="entry name" value="D37196"/>
</dbReference>
<dbReference type="GO" id="GO:0005576">
    <property type="term" value="C:extracellular region"/>
    <property type="evidence" value="ECO:0007669"/>
    <property type="project" value="UniProtKB-SubCell"/>
</dbReference>
<dbReference type="GO" id="GO:0030414">
    <property type="term" value="F:peptidase inhibitor activity"/>
    <property type="evidence" value="ECO:0007669"/>
    <property type="project" value="UniProtKB-KW"/>
</dbReference>
<dbReference type="GO" id="GO:0090729">
    <property type="term" value="F:toxin activity"/>
    <property type="evidence" value="ECO:0007669"/>
    <property type="project" value="UniProtKB-KW"/>
</dbReference>
<dbReference type="GO" id="GO:0008217">
    <property type="term" value="P:regulation of blood pressure"/>
    <property type="evidence" value="ECO:0007669"/>
    <property type="project" value="UniProtKB-KW"/>
</dbReference>
<keyword id="KW-0903">Direct protein sequencing</keyword>
<keyword id="KW-0382">Hypotensive agent</keyword>
<keyword id="KW-0481">Metalloenzyme inhibitor</keyword>
<keyword id="KW-0483">Metalloprotease inhibitor</keyword>
<keyword id="KW-0646">Protease inhibitor</keyword>
<keyword id="KW-0873">Pyrrolidone carboxylic acid</keyword>
<keyword id="KW-0964">Secreted</keyword>
<keyword id="KW-0800">Toxin</keyword>
<comment type="function">
    <text>This peptide both inhibits the activity of the angiotensin-converting enzyme (ACE) and enhances the action of bradykinin by inhibiting the peptidases that inactivate it. It acts as an indirect hypotensive agent.</text>
</comment>
<comment type="subcellular location">
    <subcellularLocation>
        <location>Secreted</location>
    </subcellularLocation>
</comment>
<comment type="tissue specificity">
    <text>Expressed by the venom gland.</text>
</comment>
<comment type="similarity">
    <text evidence="2">Belongs to the bradykinin-potentiating peptide family.</text>
</comment>